<gene>
    <name evidence="1" type="primary">rimM</name>
    <name type="ordered locus">CPF_1964</name>
</gene>
<dbReference type="EMBL" id="CP000246">
    <property type="protein sequence ID" value="ABG84236.1"/>
    <property type="molecule type" value="Genomic_DNA"/>
</dbReference>
<dbReference type="RefSeq" id="WP_003458412.1">
    <property type="nucleotide sequence ID" value="NC_008261.1"/>
</dbReference>
<dbReference type="SMR" id="Q0TPP3"/>
<dbReference type="STRING" id="195103.CPF_1964"/>
<dbReference type="PaxDb" id="195103-CPF_1964"/>
<dbReference type="GeneID" id="93001752"/>
<dbReference type="KEGG" id="cpf:CPF_1964"/>
<dbReference type="eggNOG" id="COG0806">
    <property type="taxonomic scope" value="Bacteria"/>
</dbReference>
<dbReference type="HOGENOM" id="CLU_077636_3_2_9"/>
<dbReference type="Proteomes" id="UP000001823">
    <property type="component" value="Chromosome"/>
</dbReference>
<dbReference type="GO" id="GO:0005737">
    <property type="term" value="C:cytoplasm"/>
    <property type="evidence" value="ECO:0007669"/>
    <property type="project" value="UniProtKB-SubCell"/>
</dbReference>
<dbReference type="GO" id="GO:0005840">
    <property type="term" value="C:ribosome"/>
    <property type="evidence" value="ECO:0007669"/>
    <property type="project" value="InterPro"/>
</dbReference>
<dbReference type="GO" id="GO:0043022">
    <property type="term" value="F:ribosome binding"/>
    <property type="evidence" value="ECO:0007669"/>
    <property type="project" value="InterPro"/>
</dbReference>
<dbReference type="GO" id="GO:0042274">
    <property type="term" value="P:ribosomal small subunit biogenesis"/>
    <property type="evidence" value="ECO:0007669"/>
    <property type="project" value="UniProtKB-UniRule"/>
</dbReference>
<dbReference type="GO" id="GO:0006364">
    <property type="term" value="P:rRNA processing"/>
    <property type="evidence" value="ECO:0007669"/>
    <property type="project" value="UniProtKB-UniRule"/>
</dbReference>
<dbReference type="Gene3D" id="2.30.30.240">
    <property type="entry name" value="PRC-barrel domain"/>
    <property type="match status" value="1"/>
</dbReference>
<dbReference type="Gene3D" id="2.40.30.60">
    <property type="entry name" value="RimM"/>
    <property type="match status" value="1"/>
</dbReference>
<dbReference type="HAMAP" id="MF_00014">
    <property type="entry name" value="Ribosome_mat_RimM"/>
    <property type="match status" value="1"/>
</dbReference>
<dbReference type="InterPro" id="IPR027275">
    <property type="entry name" value="PRC-brl_dom"/>
</dbReference>
<dbReference type="InterPro" id="IPR011033">
    <property type="entry name" value="PRC_barrel-like_sf"/>
</dbReference>
<dbReference type="InterPro" id="IPR011961">
    <property type="entry name" value="RimM"/>
</dbReference>
<dbReference type="InterPro" id="IPR002676">
    <property type="entry name" value="RimM_N"/>
</dbReference>
<dbReference type="InterPro" id="IPR036976">
    <property type="entry name" value="RimM_N_sf"/>
</dbReference>
<dbReference type="InterPro" id="IPR009000">
    <property type="entry name" value="Transl_B-barrel_sf"/>
</dbReference>
<dbReference type="NCBIfam" id="TIGR02273">
    <property type="entry name" value="16S_RimM"/>
    <property type="match status" value="1"/>
</dbReference>
<dbReference type="PANTHER" id="PTHR33692">
    <property type="entry name" value="RIBOSOME MATURATION FACTOR RIMM"/>
    <property type="match status" value="1"/>
</dbReference>
<dbReference type="PANTHER" id="PTHR33692:SF1">
    <property type="entry name" value="RIBOSOME MATURATION FACTOR RIMM"/>
    <property type="match status" value="1"/>
</dbReference>
<dbReference type="Pfam" id="PF05239">
    <property type="entry name" value="PRC"/>
    <property type="match status" value="1"/>
</dbReference>
<dbReference type="Pfam" id="PF01782">
    <property type="entry name" value="RimM"/>
    <property type="match status" value="1"/>
</dbReference>
<dbReference type="SUPFAM" id="SSF50346">
    <property type="entry name" value="PRC-barrel domain"/>
    <property type="match status" value="1"/>
</dbReference>
<dbReference type="SUPFAM" id="SSF50447">
    <property type="entry name" value="Translation proteins"/>
    <property type="match status" value="1"/>
</dbReference>
<proteinExistence type="inferred from homology"/>
<feature type="chain" id="PRO_1000001164" description="Ribosome maturation factor RimM">
    <location>
        <begin position="1"/>
        <end position="165"/>
    </location>
</feature>
<feature type="domain" description="PRC barrel" evidence="1">
    <location>
        <begin position="90"/>
        <end position="161"/>
    </location>
</feature>
<protein>
    <recommendedName>
        <fullName evidence="1">Ribosome maturation factor RimM</fullName>
    </recommendedName>
</protein>
<keyword id="KW-0143">Chaperone</keyword>
<keyword id="KW-0963">Cytoplasm</keyword>
<keyword id="KW-0690">Ribosome biogenesis</keyword>
<keyword id="KW-0698">rRNA processing</keyword>
<reference key="1">
    <citation type="journal article" date="2006" name="Genome Res.">
        <title>Skewed genomic variability in strains of the toxigenic bacterial pathogen, Clostridium perfringens.</title>
        <authorList>
            <person name="Myers G.S.A."/>
            <person name="Rasko D.A."/>
            <person name="Cheung J.K."/>
            <person name="Ravel J."/>
            <person name="Seshadri R."/>
            <person name="DeBoy R.T."/>
            <person name="Ren Q."/>
            <person name="Varga J."/>
            <person name="Awad M.M."/>
            <person name="Brinkac L.M."/>
            <person name="Daugherty S.C."/>
            <person name="Haft D.H."/>
            <person name="Dodson R.J."/>
            <person name="Madupu R."/>
            <person name="Nelson W.C."/>
            <person name="Rosovitz M.J."/>
            <person name="Sullivan S.A."/>
            <person name="Khouri H."/>
            <person name="Dimitrov G.I."/>
            <person name="Watkins K.L."/>
            <person name="Mulligan S."/>
            <person name="Benton J."/>
            <person name="Radune D."/>
            <person name="Fisher D.J."/>
            <person name="Atkins H.S."/>
            <person name="Hiscox T."/>
            <person name="Jost B.H."/>
            <person name="Billington S.J."/>
            <person name="Songer J.G."/>
            <person name="McClane B.A."/>
            <person name="Titball R.W."/>
            <person name="Rood J.I."/>
            <person name="Melville S.B."/>
            <person name="Paulsen I.T."/>
        </authorList>
    </citation>
    <scope>NUCLEOTIDE SEQUENCE [LARGE SCALE GENOMIC DNA]</scope>
    <source>
        <strain>ATCC 13124 / DSM 756 / JCM 1290 / NCIMB 6125 / NCTC 8237 / S 107 / Type A</strain>
    </source>
</reference>
<comment type="function">
    <text evidence="1">An accessory protein needed during the final step in the assembly of 30S ribosomal subunit, possibly for assembly of the head region. Essential for efficient processing of 16S rRNA. May be needed both before and after RbfA during the maturation of 16S rRNA. It has affinity for free ribosomal 30S subunits but not for 70S ribosomes.</text>
</comment>
<comment type="subunit">
    <text evidence="1">Binds ribosomal protein uS19.</text>
</comment>
<comment type="subcellular location">
    <subcellularLocation>
        <location evidence="1">Cytoplasm</location>
    </subcellularLocation>
</comment>
<comment type="domain">
    <text evidence="1">The PRC barrel domain binds ribosomal protein uS19.</text>
</comment>
<comment type="similarity">
    <text evidence="1">Belongs to the RimM family.</text>
</comment>
<name>RIMM_CLOP1</name>
<accession>Q0TPP3</accession>
<evidence type="ECO:0000255" key="1">
    <source>
        <dbReference type="HAMAP-Rule" id="MF_00014"/>
    </source>
</evidence>
<organism>
    <name type="scientific">Clostridium perfringens (strain ATCC 13124 / DSM 756 / JCM 1290 / NCIMB 6125 / NCTC 8237 / Type A)</name>
    <dbReference type="NCBI Taxonomy" id="195103"/>
    <lineage>
        <taxon>Bacteria</taxon>
        <taxon>Bacillati</taxon>
        <taxon>Bacillota</taxon>
        <taxon>Clostridia</taxon>
        <taxon>Eubacteriales</taxon>
        <taxon>Clostridiaceae</taxon>
        <taxon>Clostridium</taxon>
    </lineage>
</organism>
<sequence>MEDLLVVGQIINTHGLRGEMKVMPLTEDMRRFDYLEYVILKGKKVKVEGVKYFKDKVILKLEGINSIEEAEKLKRTYLEIEREDAIELEEDEYFIVDLVGCTVVDTEGFEYGKIKDVIQTPSNDVYWVQGKKEVLVPVLKDIVLDINMDEKLITIRPSGEWQYED</sequence>